<name>CYF_RHDSA</name>
<sequence length="318" mass="34348">MKNNYLANLIKTLQAIVVSVALLAPLVLPSAVNAFPVYAQQAYENPREATGRIVCANCHLAQKPVEIEVPQGVLPDTVFEAKVEIPYDLSVKQVTGDGTKGPLNVGAVLILPEGFTLAPKDRLTPEMKEKTKGVVISPYSDSKKSIFVVGPIPGAEHQTIIFPILAPNPADNKNVHFIKYPVFVGANRGRGQVNPTGDKSNNTLYSSPVEGRLTKIEKTEKGGYILTIQSKSGDPLTINVPVGPELVVKEGQKVTADQALTVDPNVGGFGQTETEIVLQSPARVKGLIAFFFTVILAQILLVLKKKQFEKVQLAEMNF</sequence>
<gene>
    <name evidence="2" type="primary">petA</name>
</gene>
<geneLocation type="chloroplast"/>
<accession>A6MVY3</accession>
<evidence type="ECO:0000250" key="1"/>
<evidence type="ECO:0000255" key="2">
    <source>
        <dbReference type="HAMAP-Rule" id="MF_00610"/>
    </source>
</evidence>
<organism>
    <name type="scientific">Rhodomonas salina</name>
    <name type="common">Cryptomonas salina</name>
    <dbReference type="NCBI Taxonomy" id="52970"/>
    <lineage>
        <taxon>Eukaryota</taxon>
        <taxon>Cryptophyceae</taxon>
        <taxon>Pyrenomonadales</taxon>
        <taxon>Pyrenomonadaceae</taxon>
        <taxon>Rhodomonas</taxon>
    </lineage>
</organism>
<proteinExistence type="inferred from homology"/>
<comment type="function">
    <text evidence="2">Component of the cytochrome b6-f complex, which mediates electron transfer between photosystem II (PSII) and photosystem I (PSI), cyclic electron flow around PSI, and state transitions.</text>
</comment>
<comment type="cofactor">
    <cofactor evidence="2">
        <name>heme</name>
        <dbReference type="ChEBI" id="CHEBI:30413"/>
    </cofactor>
    <text evidence="2">Binds 1 heme group covalently.</text>
</comment>
<comment type="subunit">
    <text evidence="1">The 4 large subunits of the cytochrome b6-f complex are cytochrome b6, subunit IV (17 kDa polypeptide, petD), cytochrome f and the Rieske protein, while the 4 small subunits are PetG, PetL, PetM and PetN. The complex functions as a dimer (By similarity).</text>
</comment>
<comment type="subcellular location">
    <subcellularLocation>
        <location evidence="2">Plastid</location>
        <location evidence="2">Chloroplast thylakoid membrane</location>
        <topology evidence="2">Single-pass membrane protein</topology>
    </subcellularLocation>
</comment>
<comment type="similarity">
    <text evidence="2">Belongs to the cytochrome f family.</text>
</comment>
<feature type="signal peptide" evidence="2">
    <location>
        <begin position="1"/>
        <end position="34"/>
    </location>
</feature>
<feature type="chain" id="PRO_0000342083" description="Cytochrome f">
    <location>
        <begin position="35"/>
        <end position="318"/>
    </location>
</feature>
<feature type="transmembrane region" description="Helical" evidence="2">
    <location>
        <begin position="284"/>
        <end position="304"/>
    </location>
</feature>
<feature type="binding site" description="axial binding residue" evidence="2">
    <location>
        <position position="35"/>
    </location>
    <ligand>
        <name>heme</name>
        <dbReference type="ChEBI" id="CHEBI:30413"/>
    </ligand>
    <ligandPart>
        <name>Fe</name>
        <dbReference type="ChEBI" id="CHEBI:18248"/>
    </ligandPart>
</feature>
<feature type="binding site" description="covalent" evidence="2">
    <location>
        <position position="55"/>
    </location>
    <ligand>
        <name>heme</name>
        <dbReference type="ChEBI" id="CHEBI:30413"/>
    </ligand>
</feature>
<feature type="binding site" description="covalent" evidence="2">
    <location>
        <position position="58"/>
    </location>
    <ligand>
        <name>heme</name>
        <dbReference type="ChEBI" id="CHEBI:30413"/>
    </ligand>
</feature>
<feature type="binding site" description="axial binding residue" evidence="2">
    <location>
        <position position="59"/>
    </location>
    <ligand>
        <name>heme</name>
        <dbReference type="ChEBI" id="CHEBI:30413"/>
    </ligand>
    <ligandPart>
        <name>Fe</name>
        <dbReference type="ChEBI" id="CHEBI:18248"/>
    </ligandPart>
</feature>
<protein>
    <recommendedName>
        <fullName evidence="2">Cytochrome f</fullName>
    </recommendedName>
</protein>
<reference key="1">
    <citation type="journal article" date="2007" name="Mol. Biol. Evol.">
        <title>Plastid genome sequence of the cryptophyte alga Rhodomonas salina CCMP1319: lateral transfer of putative DNA replication machinery and a test of chromist plastid phylogeny.</title>
        <authorList>
            <person name="Khan H."/>
            <person name="Parks N."/>
            <person name="Kozera C."/>
            <person name="Curtis B.A."/>
            <person name="Parsons B.J."/>
            <person name="Bowman S."/>
            <person name="Archibald J.M."/>
        </authorList>
    </citation>
    <scope>NUCLEOTIDE SEQUENCE [LARGE SCALE GENOMIC DNA]</scope>
    <source>
        <strain>CCMP1319 / NEPCC76 / CS-174</strain>
    </source>
</reference>
<dbReference type="EMBL" id="EF508371">
    <property type="protein sequence ID" value="ABO70754.1"/>
    <property type="molecule type" value="Genomic_DNA"/>
</dbReference>
<dbReference type="RefSeq" id="YP_001293562.1">
    <property type="nucleotide sequence ID" value="NC_009573.1"/>
</dbReference>
<dbReference type="SMR" id="A6MVY3"/>
<dbReference type="GeneID" id="5228596"/>
<dbReference type="GO" id="GO:0009535">
    <property type="term" value="C:chloroplast thylakoid membrane"/>
    <property type="evidence" value="ECO:0007669"/>
    <property type="project" value="UniProtKB-SubCell"/>
</dbReference>
<dbReference type="GO" id="GO:0009055">
    <property type="term" value="F:electron transfer activity"/>
    <property type="evidence" value="ECO:0007669"/>
    <property type="project" value="UniProtKB-UniRule"/>
</dbReference>
<dbReference type="GO" id="GO:0020037">
    <property type="term" value="F:heme binding"/>
    <property type="evidence" value="ECO:0007669"/>
    <property type="project" value="InterPro"/>
</dbReference>
<dbReference type="GO" id="GO:0005506">
    <property type="term" value="F:iron ion binding"/>
    <property type="evidence" value="ECO:0007669"/>
    <property type="project" value="InterPro"/>
</dbReference>
<dbReference type="GO" id="GO:0015979">
    <property type="term" value="P:photosynthesis"/>
    <property type="evidence" value="ECO:0007669"/>
    <property type="project" value="UniProtKB-UniRule"/>
</dbReference>
<dbReference type="FunFam" id="1.20.5.700:FF:000001">
    <property type="entry name" value="Cytochrome f"/>
    <property type="match status" value="1"/>
</dbReference>
<dbReference type="FunFam" id="2.60.40.830:FF:000001">
    <property type="entry name" value="Cytochrome f"/>
    <property type="match status" value="1"/>
</dbReference>
<dbReference type="Gene3D" id="2.40.50.100">
    <property type="match status" value="1"/>
</dbReference>
<dbReference type="Gene3D" id="2.60.40.830">
    <property type="entry name" value="Cytochrome f large domain"/>
    <property type="match status" value="1"/>
</dbReference>
<dbReference type="Gene3D" id="1.20.5.700">
    <property type="entry name" value="Single helix bin"/>
    <property type="match status" value="1"/>
</dbReference>
<dbReference type="HAMAP" id="MF_00610">
    <property type="entry name" value="Cytb6_f_cytF"/>
    <property type="match status" value="1"/>
</dbReference>
<dbReference type="InterPro" id="IPR024058">
    <property type="entry name" value="Cyt-f_TM"/>
</dbReference>
<dbReference type="InterPro" id="IPR002325">
    <property type="entry name" value="Cyt_f"/>
</dbReference>
<dbReference type="InterPro" id="IPR024094">
    <property type="entry name" value="Cyt_f_lg_dom"/>
</dbReference>
<dbReference type="InterPro" id="IPR036826">
    <property type="entry name" value="Cyt_f_lg_dom_sf"/>
</dbReference>
<dbReference type="InterPro" id="IPR011054">
    <property type="entry name" value="Rudment_hybrid_motif"/>
</dbReference>
<dbReference type="PANTHER" id="PTHR33288">
    <property type="match status" value="1"/>
</dbReference>
<dbReference type="PANTHER" id="PTHR33288:SF10">
    <property type="entry name" value="CYTOCHROME F"/>
    <property type="match status" value="1"/>
</dbReference>
<dbReference type="Pfam" id="PF01333">
    <property type="entry name" value="Apocytochr_F_C"/>
    <property type="match status" value="1"/>
</dbReference>
<dbReference type="Pfam" id="PF16639">
    <property type="entry name" value="Apocytochr_F_N"/>
    <property type="match status" value="1"/>
</dbReference>
<dbReference type="PRINTS" id="PR00610">
    <property type="entry name" value="CYTOCHROMEF"/>
</dbReference>
<dbReference type="SUPFAM" id="SSF103431">
    <property type="entry name" value="Cytochrome f subunit of the cytochrome b6f complex, transmembrane anchor"/>
    <property type="match status" value="1"/>
</dbReference>
<dbReference type="SUPFAM" id="SSF49441">
    <property type="entry name" value="Cytochrome f, large domain"/>
    <property type="match status" value="1"/>
</dbReference>
<dbReference type="SUPFAM" id="SSF51246">
    <property type="entry name" value="Rudiment single hybrid motif"/>
    <property type="match status" value="1"/>
</dbReference>
<dbReference type="PROSITE" id="PS51010">
    <property type="entry name" value="CYTF"/>
    <property type="match status" value="1"/>
</dbReference>
<keyword id="KW-0150">Chloroplast</keyword>
<keyword id="KW-0249">Electron transport</keyword>
<keyword id="KW-0349">Heme</keyword>
<keyword id="KW-0408">Iron</keyword>
<keyword id="KW-0472">Membrane</keyword>
<keyword id="KW-0479">Metal-binding</keyword>
<keyword id="KW-0602">Photosynthesis</keyword>
<keyword id="KW-0934">Plastid</keyword>
<keyword id="KW-0732">Signal</keyword>
<keyword id="KW-0793">Thylakoid</keyword>
<keyword id="KW-0812">Transmembrane</keyword>
<keyword id="KW-1133">Transmembrane helix</keyword>
<keyword id="KW-0813">Transport</keyword>